<evidence type="ECO:0000250" key="1"/>
<evidence type="ECO:0000255" key="2">
    <source>
        <dbReference type="HAMAP-Rule" id="MF_00118"/>
    </source>
</evidence>
<protein>
    <recommendedName>
        <fullName evidence="2">Elongation factor Tu</fullName>
        <shortName evidence="2">EF-Tu</shortName>
        <ecNumber evidence="2">3.6.5.3</ecNumber>
    </recommendedName>
</protein>
<feature type="chain" id="PRO_1000015786" description="Elongation factor Tu">
    <location>
        <begin position="1"/>
        <end position="397"/>
    </location>
</feature>
<feature type="domain" description="tr-type G">
    <location>
        <begin position="10"/>
        <end position="207"/>
    </location>
</feature>
<feature type="region of interest" description="G1" evidence="1">
    <location>
        <begin position="19"/>
        <end position="26"/>
    </location>
</feature>
<feature type="region of interest" description="G2" evidence="1">
    <location>
        <begin position="61"/>
        <end position="65"/>
    </location>
</feature>
<feature type="region of interest" description="G3" evidence="1">
    <location>
        <begin position="82"/>
        <end position="85"/>
    </location>
</feature>
<feature type="region of interest" description="G4" evidence="1">
    <location>
        <begin position="137"/>
        <end position="140"/>
    </location>
</feature>
<feature type="region of interest" description="G5" evidence="1">
    <location>
        <begin position="175"/>
        <end position="177"/>
    </location>
</feature>
<feature type="binding site" evidence="2">
    <location>
        <begin position="19"/>
        <end position="26"/>
    </location>
    <ligand>
        <name>GTP</name>
        <dbReference type="ChEBI" id="CHEBI:37565"/>
    </ligand>
</feature>
<feature type="binding site" evidence="2">
    <location>
        <position position="26"/>
    </location>
    <ligand>
        <name>Mg(2+)</name>
        <dbReference type="ChEBI" id="CHEBI:18420"/>
    </ligand>
</feature>
<feature type="binding site" evidence="2">
    <location>
        <begin position="82"/>
        <end position="86"/>
    </location>
    <ligand>
        <name>GTP</name>
        <dbReference type="ChEBI" id="CHEBI:37565"/>
    </ligand>
</feature>
<feature type="binding site" evidence="2">
    <location>
        <begin position="137"/>
        <end position="140"/>
    </location>
    <ligand>
        <name>GTP</name>
        <dbReference type="ChEBI" id="CHEBI:37565"/>
    </ligand>
</feature>
<comment type="function">
    <text evidence="2">GTP hydrolase that promotes the GTP-dependent binding of aminoacyl-tRNA to the A-site of ribosomes during protein biosynthesis.</text>
</comment>
<comment type="catalytic activity">
    <reaction evidence="2">
        <text>GTP + H2O = GDP + phosphate + H(+)</text>
        <dbReference type="Rhea" id="RHEA:19669"/>
        <dbReference type="ChEBI" id="CHEBI:15377"/>
        <dbReference type="ChEBI" id="CHEBI:15378"/>
        <dbReference type="ChEBI" id="CHEBI:37565"/>
        <dbReference type="ChEBI" id="CHEBI:43474"/>
        <dbReference type="ChEBI" id="CHEBI:58189"/>
        <dbReference type="EC" id="3.6.5.3"/>
    </reaction>
    <physiologicalReaction direction="left-to-right" evidence="2">
        <dbReference type="Rhea" id="RHEA:19670"/>
    </physiologicalReaction>
</comment>
<comment type="subunit">
    <text evidence="2">Monomer.</text>
</comment>
<comment type="subcellular location">
    <subcellularLocation>
        <location evidence="2">Cytoplasm</location>
    </subcellularLocation>
</comment>
<comment type="similarity">
    <text evidence="2">Belongs to the TRAFAC class translation factor GTPase superfamily. Classic translation factor GTPase family. EF-Tu/EF-1A subfamily.</text>
</comment>
<keyword id="KW-0963">Cytoplasm</keyword>
<keyword id="KW-0251">Elongation factor</keyword>
<keyword id="KW-0342">GTP-binding</keyword>
<keyword id="KW-0378">Hydrolase</keyword>
<keyword id="KW-0460">Magnesium</keyword>
<keyword id="KW-0479">Metal-binding</keyword>
<keyword id="KW-0547">Nucleotide-binding</keyword>
<keyword id="KW-0648">Protein biosynthesis</keyword>
<keyword id="KW-1185">Reference proteome</keyword>
<organism>
    <name type="scientific">Zymomonas mobilis subsp. mobilis (strain ATCC 31821 / ZM4 / CP4)</name>
    <dbReference type="NCBI Taxonomy" id="264203"/>
    <lineage>
        <taxon>Bacteria</taxon>
        <taxon>Pseudomonadati</taxon>
        <taxon>Pseudomonadota</taxon>
        <taxon>Alphaproteobacteria</taxon>
        <taxon>Sphingomonadales</taxon>
        <taxon>Zymomonadaceae</taxon>
        <taxon>Zymomonas</taxon>
    </lineage>
</organism>
<accession>Q5NQ65</accession>
<gene>
    <name evidence="2" type="primary">tuf</name>
    <name type="ordered locus">ZMO0516</name>
</gene>
<reference key="1">
    <citation type="journal article" date="2005" name="Nat. Biotechnol.">
        <title>The genome sequence of the ethanologenic bacterium Zymomonas mobilis ZM4.</title>
        <authorList>
            <person name="Seo J.-S."/>
            <person name="Chong H."/>
            <person name="Park H.S."/>
            <person name="Yoon K.-O."/>
            <person name="Jung C."/>
            <person name="Kim J.J."/>
            <person name="Hong J.H."/>
            <person name="Kim H."/>
            <person name="Kim J.-H."/>
            <person name="Kil J.-I."/>
            <person name="Park C.J."/>
            <person name="Oh H.-M."/>
            <person name="Lee J.-S."/>
            <person name="Jin S.-J."/>
            <person name="Um H.-W."/>
            <person name="Lee H.-J."/>
            <person name="Oh S.-J."/>
            <person name="Kim J.Y."/>
            <person name="Kang H.L."/>
            <person name="Lee S.Y."/>
            <person name="Lee K.J."/>
            <person name="Kang H.S."/>
        </authorList>
    </citation>
    <scope>NUCLEOTIDE SEQUENCE [LARGE SCALE GENOMIC DNA]</scope>
    <source>
        <strain>ATCC 31821 / ZM4 / CP4</strain>
    </source>
</reference>
<proteinExistence type="inferred from homology"/>
<dbReference type="EC" id="3.6.5.3" evidence="2"/>
<dbReference type="EMBL" id="AE008692">
    <property type="protein sequence ID" value="AAV89140.1"/>
    <property type="molecule type" value="Genomic_DNA"/>
</dbReference>
<dbReference type="RefSeq" id="WP_011240421.1">
    <property type="nucleotide sequence ID" value="NZ_CP035711.1"/>
</dbReference>
<dbReference type="SMR" id="Q5NQ65"/>
<dbReference type="STRING" id="264203.ZMO0516"/>
<dbReference type="GeneID" id="79904294"/>
<dbReference type="KEGG" id="zmo:ZMO0516"/>
<dbReference type="eggNOG" id="COG0050">
    <property type="taxonomic scope" value="Bacteria"/>
</dbReference>
<dbReference type="HOGENOM" id="CLU_007265_0_1_5"/>
<dbReference type="Proteomes" id="UP000001173">
    <property type="component" value="Chromosome"/>
</dbReference>
<dbReference type="GO" id="GO:0005829">
    <property type="term" value="C:cytosol"/>
    <property type="evidence" value="ECO:0007669"/>
    <property type="project" value="TreeGrafter"/>
</dbReference>
<dbReference type="GO" id="GO:0005525">
    <property type="term" value="F:GTP binding"/>
    <property type="evidence" value="ECO:0007669"/>
    <property type="project" value="UniProtKB-UniRule"/>
</dbReference>
<dbReference type="GO" id="GO:0003924">
    <property type="term" value="F:GTPase activity"/>
    <property type="evidence" value="ECO:0007669"/>
    <property type="project" value="InterPro"/>
</dbReference>
<dbReference type="GO" id="GO:0097216">
    <property type="term" value="F:guanosine tetraphosphate binding"/>
    <property type="evidence" value="ECO:0007669"/>
    <property type="project" value="UniProtKB-ARBA"/>
</dbReference>
<dbReference type="GO" id="GO:0003746">
    <property type="term" value="F:translation elongation factor activity"/>
    <property type="evidence" value="ECO:0007669"/>
    <property type="project" value="UniProtKB-UniRule"/>
</dbReference>
<dbReference type="CDD" id="cd01884">
    <property type="entry name" value="EF_Tu"/>
    <property type="match status" value="1"/>
</dbReference>
<dbReference type="CDD" id="cd03697">
    <property type="entry name" value="EFTU_II"/>
    <property type="match status" value="1"/>
</dbReference>
<dbReference type="CDD" id="cd03707">
    <property type="entry name" value="EFTU_III"/>
    <property type="match status" value="1"/>
</dbReference>
<dbReference type="FunFam" id="2.40.30.10:FF:000001">
    <property type="entry name" value="Elongation factor Tu"/>
    <property type="match status" value="1"/>
</dbReference>
<dbReference type="FunFam" id="3.40.50.300:FF:000003">
    <property type="entry name" value="Elongation factor Tu"/>
    <property type="match status" value="1"/>
</dbReference>
<dbReference type="Gene3D" id="3.40.50.300">
    <property type="entry name" value="P-loop containing nucleotide triphosphate hydrolases"/>
    <property type="match status" value="1"/>
</dbReference>
<dbReference type="Gene3D" id="2.40.30.10">
    <property type="entry name" value="Translation factors"/>
    <property type="match status" value="2"/>
</dbReference>
<dbReference type="HAMAP" id="MF_00118_B">
    <property type="entry name" value="EF_Tu_B"/>
    <property type="match status" value="1"/>
</dbReference>
<dbReference type="InterPro" id="IPR041709">
    <property type="entry name" value="EF-Tu_GTP-bd"/>
</dbReference>
<dbReference type="InterPro" id="IPR050055">
    <property type="entry name" value="EF-Tu_GTPase"/>
</dbReference>
<dbReference type="InterPro" id="IPR004161">
    <property type="entry name" value="EFTu-like_2"/>
</dbReference>
<dbReference type="InterPro" id="IPR033720">
    <property type="entry name" value="EFTU_2"/>
</dbReference>
<dbReference type="InterPro" id="IPR031157">
    <property type="entry name" value="G_TR_CS"/>
</dbReference>
<dbReference type="InterPro" id="IPR027417">
    <property type="entry name" value="P-loop_NTPase"/>
</dbReference>
<dbReference type="InterPro" id="IPR005225">
    <property type="entry name" value="Small_GTP-bd"/>
</dbReference>
<dbReference type="InterPro" id="IPR000795">
    <property type="entry name" value="T_Tr_GTP-bd_dom"/>
</dbReference>
<dbReference type="InterPro" id="IPR009000">
    <property type="entry name" value="Transl_B-barrel_sf"/>
</dbReference>
<dbReference type="InterPro" id="IPR009001">
    <property type="entry name" value="Transl_elong_EF1A/Init_IF2_C"/>
</dbReference>
<dbReference type="InterPro" id="IPR004541">
    <property type="entry name" value="Transl_elong_EFTu/EF1A_bac/org"/>
</dbReference>
<dbReference type="InterPro" id="IPR004160">
    <property type="entry name" value="Transl_elong_EFTu/EF1A_C"/>
</dbReference>
<dbReference type="NCBIfam" id="TIGR00485">
    <property type="entry name" value="EF-Tu"/>
    <property type="match status" value="1"/>
</dbReference>
<dbReference type="NCBIfam" id="NF000766">
    <property type="entry name" value="PRK00049.1"/>
    <property type="match status" value="1"/>
</dbReference>
<dbReference type="NCBIfam" id="NF009372">
    <property type="entry name" value="PRK12735.1"/>
    <property type="match status" value="1"/>
</dbReference>
<dbReference type="NCBIfam" id="NF009373">
    <property type="entry name" value="PRK12736.1"/>
    <property type="match status" value="1"/>
</dbReference>
<dbReference type="NCBIfam" id="TIGR00231">
    <property type="entry name" value="small_GTP"/>
    <property type="match status" value="1"/>
</dbReference>
<dbReference type="PANTHER" id="PTHR43721:SF22">
    <property type="entry name" value="ELONGATION FACTOR TU, MITOCHONDRIAL"/>
    <property type="match status" value="1"/>
</dbReference>
<dbReference type="PANTHER" id="PTHR43721">
    <property type="entry name" value="ELONGATION FACTOR TU-RELATED"/>
    <property type="match status" value="1"/>
</dbReference>
<dbReference type="Pfam" id="PF00009">
    <property type="entry name" value="GTP_EFTU"/>
    <property type="match status" value="1"/>
</dbReference>
<dbReference type="Pfam" id="PF03144">
    <property type="entry name" value="GTP_EFTU_D2"/>
    <property type="match status" value="1"/>
</dbReference>
<dbReference type="Pfam" id="PF03143">
    <property type="entry name" value="GTP_EFTU_D3"/>
    <property type="match status" value="1"/>
</dbReference>
<dbReference type="PRINTS" id="PR00315">
    <property type="entry name" value="ELONGATNFCT"/>
</dbReference>
<dbReference type="SUPFAM" id="SSF50465">
    <property type="entry name" value="EF-Tu/eEF-1alpha/eIF2-gamma C-terminal domain"/>
    <property type="match status" value="1"/>
</dbReference>
<dbReference type="SUPFAM" id="SSF52540">
    <property type="entry name" value="P-loop containing nucleoside triphosphate hydrolases"/>
    <property type="match status" value="1"/>
</dbReference>
<dbReference type="SUPFAM" id="SSF50447">
    <property type="entry name" value="Translation proteins"/>
    <property type="match status" value="1"/>
</dbReference>
<dbReference type="PROSITE" id="PS00301">
    <property type="entry name" value="G_TR_1"/>
    <property type="match status" value="1"/>
</dbReference>
<dbReference type="PROSITE" id="PS51722">
    <property type="entry name" value="G_TR_2"/>
    <property type="match status" value="1"/>
</dbReference>
<sequence length="397" mass="43095">MAKAKFERNKPHCNIGTIGHVDHGKTTLTAAITKVLAEAGGGNTFVDYANIDKAPEERERGITISTSHVEYETETRHYAHVDCPGHADYVKNMITGAAQMDGAILVVSAADGPMPQTREHILLARQVGVPALVVFMNKVDQVDDPELLELVEMEIRELLSSYDFPGDDIPIVKGSALAALEDKNPEIGKEAILSLMAAVDEYIPQPERPLDKSFLMPIEDVFSISGRGTVVTGRVETGIVKVGEEVEIVGLRDTKKTTVTGVEMFRKLLDQGQAGDNIGALLRGTARTEVERGQVLAKPGSITPHTEFKAEVYVLSKDEGGRHTPFFANYRPQFYFRTTDVTGEITLPEDVEMVMPGDNIAFGVKLIAPIAMDPGLRFAIREGGRTVGAGVVSSIIK</sequence>
<name>EFTU_ZYMMO</name>